<feature type="chain" id="PRO_1000129170" description="Succinate--CoA ligase [ADP-forming] subunit beta">
    <location>
        <begin position="1"/>
        <end position="392"/>
    </location>
</feature>
<feature type="domain" description="ATP-grasp" evidence="1">
    <location>
        <begin position="9"/>
        <end position="248"/>
    </location>
</feature>
<feature type="binding site" evidence="1">
    <location>
        <position position="50"/>
    </location>
    <ligand>
        <name>ATP</name>
        <dbReference type="ChEBI" id="CHEBI:30616"/>
    </ligand>
</feature>
<feature type="binding site" evidence="1">
    <location>
        <begin position="57"/>
        <end position="59"/>
    </location>
    <ligand>
        <name>ATP</name>
        <dbReference type="ChEBI" id="CHEBI:30616"/>
    </ligand>
</feature>
<feature type="binding site" evidence="1">
    <location>
        <position position="103"/>
    </location>
    <ligand>
        <name>ATP</name>
        <dbReference type="ChEBI" id="CHEBI:30616"/>
    </ligand>
</feature>
<feature type="binding site" evidence="1">
    <location>
        <position position="106"/>
    </location>
    <ligand>
        <name>ATP</name>
        <dbReference type="ChEBI" id="CHEBI:30616"/>
    </ligand>
</feature>
<feature type="binding site" evidence="1">
    <location>
        <position position="111"/>
    </location>
    <ligand>
        <name>ATP</name>
        <dbReference type="ChEBI" id="CHEBI:30616"/>
    </ligand>
</feature>
<feature type="binding site" evidence="1">
    <location>
        <position position="203"/>
    </location>
    <ligand>
        <name>Mg(2+)</name>
        <dbReference type="ChEBI" id="CHEBI:18420"/>
    </ligand>
</feature>
<feature type="binding site" evidence="1">
    <location>
        <position position="217"/>
    </location>
    <ligand>
        <name>Mg(2+)</name>
        <dbReference type="ChEBI" id="CHEBI:18420"/>
    </ligand>
</feature>
<feature type="binding site" evidence="1">
    <location>
        <position position="268"/>
    </location>
    <ligand>
        <name>substrate</name>
        <note>ligand shared with subunit alpha</note>
    </ligand>
</feature>
<feature type="binding site" evidence="1">
    <location>
        <begin position="325"/>
        <end position="327"/>
    </location>
    <ligand>
        <name>substrate</name>
        <note>ligand shared with subunit alpha</note>
    </ligand>
</feature>
<keyword id="KW-0067">ATP-binding</keyword>
<keyword id="KW-0436">Ligase</keyword>
<keyword id="KW-0460">Magnesium</keyword>
<keyword id="KW-0479">Metal-binding</keyword>
<keyword id="KW-0547">Nucleotide-binding</keyword>
<keyword id="KW-0816">Tricarboxylic acid cycle</keyword>
<organism>
    <name type="scientific">Chlorobium limicola (strain DSM 245 / NBRC 103803 / 6330)</name>
    <dbReference type="NCBI Taxonomy" id="290315"/>
    <lineage>
        <taxon>Bacteria</taxon>
        <taxon>Pseudomonadati</taxon>
        <taxon>Chlorobiota</taxon>
        <taxon>Chlorobiia</taxon>
        <taxon>Chlorobiales</taxon>
        <taxon>Chlorobiaceae</taxon>
        <taxon>Chlorobium/Pelodictyon group</taxon>
        <taxon>Chlorobium</taxon>
    </lineage>
</organism>
<sequence>MNIHEYQGKDILKKFGVSVPRGIVAFSPDEAKQAAQQLFEEQGSPVVVVKAQIHAGGRGKAGGVKLAKSPDEAMEIARQMLGATLVTHQTGPEGKQVSRLLVEEGMNIDREFYVGITLDRSTSRNVLMVSTEGGMEIEKVAEETPDKLLKIQVDPLYGLQGFQAREAAFFLGLEGEQFRNAVTFIIALYNAYMTIDASLAEINPLVVTKEGRVLALDAKINFDGNALFRHKNFLELRDTNEEDPFEVEASKSNLNYVRLDGNVGCMVNGAGLAMATMDMIQLAGGRPANFLDVGGGASPETVEEGFKIILSDKNVRAILVNIFGGIVRCDRVAGGIIQAARKIGLNLPVIVRLEGTNAEIAQKMLDESGLNLIAANGLHDAAAKVNQALAAG</sequence>
<comment type="function">
    <text evidence="1">Succinyl-CoA synthetase functions in the citric acid cycle (TCA), coupling the hydrolysis of succinyl-CoA to the synthesis of either ATP or GTP and thus represents the only step of substrate-level phosphorylation in the TCA. The beta subunit provides nucleotide specificity of the enzyme and binds the substrate succinate, while the binding sites for coenzyme A and phosphate are found in the alpha subunit.</text>
</comment>
<comment type="catalytic activity">
    <reaction evidence="1">
        <text>succinate + ATP + CoA = succinyl-CoA + ADP + phosphate</text>
        <dbReference type="Rhea" id="RHEA:17661"/>
        <dbReference type="ChEBI" id="CHEBI:30031"/>
        <dbReference type="ChEBI" id="CHEBI:30616"/>
        <dbReference type="ChEBI" id="CHEBI:43474"/>
        <dbReference type="ChEBI" id="CHEBI:57287"/>
        <dbReference type="ChEBI" id="CHEBI:57292"/>
        <dbReference type="ChEBI" id="CHEBI:456216"/>
        <dbReference type="EC" id="6.2.1.5"/>
    </reaction>
    <physiologicalReaction direction="right-to-left" evidence="1">
        <dbReference type="Rhea" id="RHEA:17663"/>
    </physiologicalReaction>
</comment>
<comment type="catalytic activity">
    <reaction evidence="1">
        <text>GTP + succinate + CoA = succinyl-CoA + GDP + phosphate</text>
        <dbReference type="Rhea" id="RHEA:22120"/>
        <dbReference type="ChEBI" id="CHEBI:30031"/>
        <dbReference type="ChEBI" id="CHEBI:37565"/>
        <dbReference type="ChEBI" id="CHEBI:43474"/>
        <dbReference type="ChEBI" id="CHEBI:57287"/>
        <dbReference type="ChEBI" id="CHEBI:57292"/>
        <dbReference type="ChEBI" id="CHEBI:58189"/>
    </reaction>
    <physiologicalReaction direction="right-to-left" evidence="1">
        <dbReference type="Rhea" id="RHEA:22122"/>
    </physiologicalReaction>
</comment>
<comment type="cofactor">
    <cofactor evidence="1">
        <name>Mg(2+)</name>
        <dbReference type="ChEBI" id="CHEBI:18420"/>
    </cofactor>
    <text evidence="1">Binds 1 Mg(2+) ion per subunit.</text>
</comment>
<comment type="pathway">
    <text evidence="1">Carbohydrate metabolism; tricarboxylic acid cycle; succinate from succinyl-CoA (ligase route): step 1/1.</text>
</comment>
<comment type="subunit">
    <text evidence="1">Heterotetramer of two alpha and two beta subunits.</text>
</comment>
<comment type="similarity">
    <text evidence="1">Belongs to the succinate/malate CoA ligase beta subunit family.</text>
</comment>
<dbReference type="EC" id="6.2.1.5" evidence="1"/>
<dbReference type="EMBL" id="CP001097">
    <property type="protein sequence ID" value="ACD90975.1"/>
    <property type="molecule type" value="Genomic_DNA"/>
</dbReference>
<dbReference type="RefSeq" id="WP_012466844.1">
    <property type="nucleotide sequence ID" value="NC_010803.1"/>
</dbReference>
<dbReference type="SMR" id="B3EFL3"/>
<dbReference type="STRING" id="290315.Clim_1943"/>
<dbReference type="KEGG" id="cli:Clim_1943"/>
<dbReference type="eggNOG" id="COG0045">
    <property type="taxonomic scope" value="Bacteria"/>
</dbReference>
<dbReference type="HOGENOM" id="CLU_037430_0_2_10"/>
<dbReference type="OrthoDB" id="9802602at2"/>
<dbReference type="UniPathway" id="UPA00223">
    <property type="reaction ID" value="UER00999"/>
</dbReference>
<dbReference type="Proteomes" id="UP000008841">
    <property type="component" value="Chromosome"/>
</dbReference>
<dbReference type="GO" id="GO:0005829">
    <property type="term" value="C:cytosol"/>
    <property type="evidence" value="ECO:0007669"/>
    <property type="project" value="TreeGrafter"/>
</dbReference>
<dbReference type="GO" id="GO:0042709">
    <property type="term" value="C:succinate-CoA ligase complex"/>
    <property type="evidence" value="ECO:0007669"/>
    <property type="project" value="TreeGrafter"/>
</dbReference>
<dbReference type="GO" id="GO:0005524">
    <property type="term" value="F:ATP binding"/>
    <property type="evidence" value="ECO:0007669"/>
    <property type="project" value="UniProtKB-UniRule"/>
</dbReference>
<dbReference type="GO" id="GO:0000287">
    <property type="term" value="F:magnesium ion binding"/>
    <property type="evidence" value="ECO:0007669"/>
    <property type="project" value="UniProtKB-UniRule"/>
</dbReference>
<dbReference type="GO" id="GO:0004775">
    <property type="term" value="F:succinate-CoA ligase (ADP-forming) activity"/>
    <property type="evidence" value="ECO:0007669"/>
    <property type="project" value="UniProtKB-UniRule"/>
</dbReference>
<dbReference type="GO" id="GO:0004776">
    <property type="term" value="F:succinate-CoA ligase (GDP-forming) activity"/>
    <property type="evidence" value="ECO:0007669"/>
    <property type="project" value="RHEA"/>
</dbReference>
<dbReference type="GO" id="GO:0006104">
    <property type="term" value="P:succinyl-CoA metabolic process"/>
    <property type="evidence" value="ECO:0007669"/>
    <property type="project" value="TreeGrafter"/>
</dbReference>
<dbReference type="GO" id="GO:0006099">
    <property type="term" value="P:tricarboxylic acid cycle"/>
    <property type="evidence" value="ECO:0007669"/>
    <property type="project" value="UniProtKB-UniRule"/>
</dbReference>
<dbReference type="FunFam" id="3.30.1490.20:FF:000002">
    <property type="entry name" value="Succinate--CoA ligase [ADP-forming] subunit beta"/>
    <property type="match status" value="1"/>
</dbReference>
<dbReference type="FunFam" id="3.30.470.20:FF:000002">
    <property type="entry name" value="Succinate--CoA ligase [ADP-forming] subunit beta"/>
    <property type="match status" value="1"/>
</dbReference>
<dbReference type="FunFam" id="3.40.50.261:FF:000001">
    <property type="entry name" value="Succinate--CoA ligase [ADP-forming] subunit beta"/>
    <property type="match status" value="1"/>
</dbReference>
<dbReference type="Gene3D" id="3.30.1490.20">
    <property type="entry name" value="ATP-grasp fold, A domain"/>
    <property type="match status" value="1"/>
</dbReference>
<dbReference type="Gene3D" id="3.30.470.20">
    <property type="entry name" value="ATP-grasp fold, B domain"/>
    <property type="match status" value="1"/>
</dbReference>
<dbReference type="Gene3D" id="3.40.50.261">
    <property type="entry name" value="Succinyl-CoA synthetase domains"/>
    <property type="match status" value="1"/>
</dbReference>
<dbReference type="HAMAP" id="MF_00558">
    <property type="entry name" value="Succ_CoA_beta"/>
    <property type="match status" value="1"/>
</dbReference>
<dbReference type="InterPro" id="IPR011761">
    <property type="entry name" value="ATP-grasp"/>
</dbReference>
<dbReference type="InterPro" id="IPR013650">
    <property type="entry name" value="ATP-grasp_succ-CoA_synth-type"/>
</dbReference>
<dbReference type="InterPro" id="IPR013815">
    <property type="entry name" value="ATP_grasp_subdomain_1"/>
</dbReference>
<dbReference type="InterPro" id="IPR017866">
    <property type="entry name" value="Succ-CoA_synthase_bsu_CS"/>
</dbReference>
<dbReference type="InterPro" id="IPR005811">
    <property type="entry name" value="SUCC_ACL_C"/>
</dbReference>
<dbReference type="InterPro" id="IPR005809">
    <property type="entry name" value="Succ_CoA_ligase-like_bsu"/>
</dbReference>
<dbReference type="InterPro" id="IPR016102">
    <property type="entry name" value="Succinyl-CoA_synth-like"/>
</dbReference>
<dbReference type="NCBIfam" id="NF001913">
    <property type="entry name" value="PRK00696.1"/>
    <property type="match status" value="1"/>
</dbReference>
<dbReference type="NCBIfam" id="TIGR01016">
    <property type="entry name" value="sucCoAbeta"/>
    <property type="match status" value="1"/>
</dbReference>
<dbReference type="PANTHER" id="PTHR11815:SF10">
    <property type="entry name" value="SUCCINATE--COA LIGASE [GDP-FORMING] SUBUNIT BETA, MITOCHONDRIAL"/>
    <property type="match status" value="1"/>
</dbReference>
<dbReference type="PANTHER" id="PTHR11815">
    <property type="entry name" value="SUCCINYL-COA SYNTHETASE BETA CHAIN"/>
    <property type="match status" value="1"/>
</dbReference>
<dbReference type="Pfam" id="PF08442">
    <property type="entry name" value="ATP-grasp_2"/>
    <property type="match status" value="1"/>
</dbReference>
<dbReference type="Pfam" id="PF00549">
    <property type="entry name" value="Ligase_CoA"/>
    <property type="match status" value="1"/>
</dbReference>
<dbReference type="PIRSF" id="PIRSF001554">
    <property type="entry name" value="SucCS_beta"/>
    <property type="match status" value="1"/>
</dbReference>
<dbReference type="SUPFAM" id="SSF56059">
    <property type="entry name" value="Glutathione synthetase ATP-binding domain-like"/>
    <property type="match status" value="1"/>
</dbReference>
<dbReference type="SUPFAM" id="SSF52210">
    <property type="entry name" value="Succinyl-CoA synthetase domains"/>
    <property type="match status" value="1"/>
</dbReference>
<dbReference type="PROSITE" id="PS50975">
    <property type="entry name" value="ATP_GRASP"/>
    <property type="match status" value="1"/>
</dbReference>
<dbReference type="PROSITE" id="PS01217">
    <property type="entry name" value="SUCCINYL_COA_LIG_3"/>
    <property type="match status" value="1"/>
</dbReference>
<reference key="1">
    <citation type="submission" date="2008-05" db="EMBL/GenBank/DDBJ databases">
        <title>Complete sequence of Chlorobium limicola DSM 245.</title>
        <authorList>
            <consortium name="US DOE Joint Genome Institute"/>
            <person name="Lucas S."/>
            <person name="Copeland A."/>
            <person name="Lapidus A."/>
            <person name="Glavina del Rio T."/>
            <person name="Dalin E."/>
            <person name="Tice H."/>
            <person name="Bruce D."/>
            <person name="Goodwin L."/>
            <person name="Pitluck S."/>
            <person name="Schmutz J."/>
            <person name="Larimer F."/>
            <person name="Land M."/>
            <person name="Hauser L."/>
            <person name="Kyrpides N."/>
            <person name="Ovchinnikova G."/>
            <person name="Zhao F."/>
            <person name="Li T."/>
            <person name="Liu Z."/>
            <person name="Overmann J."/>
            <person name="Bryant D.A."/>
            <person name="Richardson P."/>
        </authorList>
    </citation>
    <scope>NUCLEOTIDE SEQUENCE [LARGE SCALE GENOMIC DNA]</scope>
    <source>
        <strain>DSM 245 / NBRC 103803 / 6330</strain>
    </source>
</reference>
<proteinExistence type="inferred from homology"/>
<name>SUCC_CHLL2</name>
<evidence type="ECO:0000255" key="1">
    <source>
        <dbReference type="HAMAP-Rule" id="MF_00558"/>
    </source>
</evidence>
<protein>
    <recommendedName>
        <fullName evidence="1">Succinate--CoA ligase [ADP-forming] subunit beta</fullName>
        <ecNumber evidence="1">6.2.1.5</ecNumber>
    </recommendedName>
    <alternativeName>
        <fullName evidence="1">Succinyl-CoA synthetase subunit beta</fullName>
        <shortName evidence="1">SCS-beta</shortName>
    </alternativeName>
</protein>
<gene>
    <name evidence="1" type="primary">sucC</name>
    <name type="ordered locus">Clim_1943</name>
</gene>
<accession>B3EFL3</accession>